<proteinExistence type="inferred from homology"/>
<dbReference type="EC" id="6.3.1.5" evidence="1"/>
<dbReference type="EMBL" id="AL935263">
    <property type="protein sequence ID" value="CCC78052.1"/>
    <property type="molecule type" value="Genomic_DNA"/>
</dbReference>
<dbReference type="RefSeq" id="WP_003640900.1">
    <property type="nucleotide sequence ID" value="NC_004567.2"/>
</dbReference>
<dbReference type="RefSeq" id="YP_004888566.1">
    <property type="nucleotide sequence ID" value="NC_004567.2"/>
</dbReference>
<dbReference type="SMR" id="Q88Z14"/>
<dbReference type="STRING" id="220668.lp_0566"/>
<dbReference type="EnsemblBacteria" id="CCC78052">
    <property type="protein sequence ID" value="CCC78052"/>
    <property type="gene ID" value="lp_0566"/>
</dbReference>
<dbReference type="GeneID" id="77217177"/>
<dbReference type="KEGG" id="lpl:lp_0566"/>
<dbReference type="PATRIC" id="fig|220668.9.peg.470"/>
<dbReference type="eggNOG" id="COG0171">
    <property type="taxonomic scope" value="Bacteria"/>
</dbReference>
<dbReference type="HOGENOM" id="CLU_059327_3_0_9"/>
<dbReference type="OrthoDB" id="9803818at2"/>
<dbReference type="PhylomeDB" id="Q88Z14"/>
<dbReference type="UniPathway" id="UPA00253">
    <property type="reaction ID" value="UER00333"/>
</dbReference>
<dbReference type="Proteomes" id="UP000000432">
    <property type="component" value="Chromosome"/>
</dbReference>
<dbReference type="GO" id="GO:0005737">
    <property type="term" value="C:cytoplasm"/>
    <property type="evidence" value="ECO:0007669"/>
    <property type="project" value="InterPro"/>
</dbReference>
<dbReference type="GO" id="GO:0005524">
    <property type="term" value="F:ATP binding"/>
    <property type="evidence" value="ECO:0007669"/>
    <property type="project" value="UniProtKB-UniRule"/>
</dbReference>
<dbReference type="GO" id="GO:0004359">
    <property type="term" value="F:glutaminase activity"/>
    <property type="evidence" value="ECO:0007669"/>
    <property type="project" value="InterPro"/>
</dbReference>
<dbReference type="GO" id="GO:0046872">
    <property type="term" value="F:metal ion binding"/>
    <property type="evidence" value="ECO:0007669"/>
    <property type="project" value="UniProtKB-KW"/>
</dbReference>
<dbReference type="GO" id="GO:0003952">
    <property type="term" value="F:NAD+ synthase (glutamine-hydrolyzing) activity"/>
    <property type="evidence" value="ECO:0007669"/>
    <property type="project" value="InterPro"/>
</dbReference>
<dbReference type="GO" id="GO:0008795">
    <property type="term" value="F:NAD+ synthase activity"/>
    <property type="evidence" value="ECO:0007669"/>
    <property type="project" value="UniProtKB-UniRule"/>
</dbReference>
<dbReference type="GO" id="GO:0009435">
    <property type="term" value="P:NAD biosynthetic process"/>
    <property type="evidence" value="ECO:0007669"/>
    <property type="project" value="UniProtKB-UniRule"/>
</dbReference>
<dbReference type="CDD" id="cd00553">
    <property type="entry name" value="NAD_synthase"/>
    <property type="match status" value="1"/>
</dbReference>
<dbReference type="FunFam" id="3.40.50.620:FF:000015">
    <property type="entry name" value="NH(3)-dependent NAD(+) synthetase"/>
    <property type="match status" value="1"/>
</dbReference>
<dbReference type="Gene3D" id="3.40.50.620">
    <property type="entry name" value="HUPs"/>
    <property type="match status" value="1"/>
</dbReference>
<dbReference type="HAMAP" id="MF_00193">
    <property type="entry name" value="NadE_ammonia_dep"/>
    <property type="match status" value="1"/>
</dbReference>
<dbReference type="InterPro" id="IPR022310">
    <property type="entry name" value="NAD/GMP_synthase"/>
</dbReference>
<dbReference type="InterPro" id="IPR003694">
    <property type="entry name" value="NAD_synthase"/>
</dbReference>
<dbReference type="InterPro" id="IPR022926">
    <property type="entry name" value="NH(3)-dep_NAD(+)_synth"/>
</dbReference>
<dbReference type="InterPro" id="IPR014729">
    <property type="entry name" value="Rossmann-like_a/b/a_fold"/>
</dbReference>
<dbReference type="NCBIfam" id="TIGR00552">
    <property type="entry name" value="nadE"/>
    <property type="match status" value="1"/>
</dbReference>
<dbReference type="NCBIfam" id="NF001979">
    <property type="entry name" value="PRK00768.1"/>
    <property type="match status" value="1"/>
</dbReference>
<dbReference type="PANTHER" id="PTHR23090">
    <property type="entry name" value="NH 3 /GLUTAMINE-DEPENDENT NAD + SYNTHETASE"/>
    <property type="match status" value="1"/>
</dbReference>
<dbReference type="PANTHER" id="PTHR23090:SF7">
    <property type="entry name" value="NH(3)-DEPENDENT NAD(+) SYNTHETASE"/>
    <property type="match status" value="1"/>
</dbReference>
<dbReference type="Pfam" id="PF02540">
    <property type="entry name" value="NAD_synthase"/>
    <property type="match status" value="1"/>
</dbReference>
<dbReference type="SUPFAM" id="SSF52402">
    <property type="entry name" value="Adenine nucleotide alpha hydrolases-like"/>
    <property type="match status" value="1"/>
</dbReference>
<gene>
    <name evidence="1" type="primary">nadE</name>
    <name type="ordered locus">lp_0566</name>
</gene>
<name>NADE_LACPL</name>
<reference key="1">
    <citation type="journal article" date="2003" name="Proc. Natl. Acad. Sci. U.S.A.">
        <title>Complete genome sequence of Lactobacillus plantarum WCFS1.</title>
        <authorList>
            <person name="Kleerebezem M."/>
            <person name="Boekhorst J."/>
            <person name="van Kranenburg R."/>
            <person name="Molenaar D."/>
            <person name="Kuipers O.P."/>
            <person name="Leer R."/>
            <person name="Tarchini R."/>
            <person name="Peters S.A."/>
            <person name="Sandbrink H.M."/>
            <person name="Fiers M.W.E.J."/>
            <person name="Stiekema W."/>
            <person name="Klein Lankhorst R.M."/>
            <person name="Bron P.A."/>
            <person name="Hoffer S.M."/>
            <person name="Nierop Groot M.N."/>
            <person name="Kerkhoven R."/>
            <person name="De Vries M."/>
            <person name="Ursing B."/>
            <person name="De Vos W.M."/>
            <person name="Siezen R.J."/>
        </authorList>
    </citation>
    <scope>NUCLEOTIDE SEQUENCE [LARGE SCALE GENOMIC DNA]</scope>
    <source>
        <strain>ATCC BAA-793 / NCIMB 8826 / WCFS1</strain>
    </source>
</reference>
<reference key="2">
    <citation type="journal article" date="2012" name="J. Bacteriol.">
        <title>Complete resequencing and reannotation of the Lactobacillus plantarum WCFS1 genome.</title>
        <authorList>
            <person name="Siezen R.J."/>
            <person name="Francke C."/>
            <person name="Renckens B."/>
            <person name="Boekhorst J."/>
            <person name="Wels M."/>
            <person name="Kleerebezem M."/>
            <person name="van Hijum S.A."/>
        </authorList>
    </citation>
    <scope>NUCLEOTIDE SEQUENCE [LARGE SCALE GENOMIC DNA]</scope>
    <scope>GENOME REANNOTATION</scope>
    <source>
        <strain>ATCC BAA-793 / NCIMB 8826 / WCFS1</strain>
    </source>
</reference>
<accession>Q88Z14</accession>
<accession>F9UL37</accession>
<evidence type="ECO:0000255" key="1">
    <source>
        <dbReference type="HAMAP-Rule" id="MF_00193"/>
    </source>
</evidence>
<organism>
    <name type="scientific">Lactiplantibacillus plantarum (strain ATCC BAA-793 / NCIMB 8826 / WCFS1)</name>
    <name type="common">Lactobacillus plantarum</name>
    <dbReference type="NCBI Taxonomy" id="220668"/>
    <lineage>
        <taxon>Bacteria</taxon>
        <taxon>Bacillati</taxon>
        <taxon>Bacillota</taxon>
        <taxon>Bacilli</taxon>
        <taxon>Lactobacillales</taxon>
        <taxon>Lactobacillaceae</taxon>
        <taxon>Lactiplantibacillus</taxon>
    </lineage>
</organism>
<protein>
    <recommendedName>
        <fullName evidence="1">NH(3)-dependent NAD(+) synthetase</fullName>
        <ecNumber evidence="1">6.3.1.5</ecNumber>
    </recommendedName>
</protein>
<feature type="chain" id="PRO_1000077568" description="NH(3)-dependent NAD(+) synthetase">
    <location>
        <begin position="1"/>
        <end position="275"/>
    </location>
</feature>
<feature type="binding site" evidence="1">
    <location>
        <begin position="47"/>
        <end position="54"/>
    </location>
    <ligand>
        <name>ATP</name>
        <dbReference type="ChEBI" id="CHEBI:30616"/>
    </ligand>
</feature>
<feature type="binding site" evidence="1">
    <location>
        <position position="53"/>
    </location>
    <ligand>
        <name>Mg(2+)</name>
        <dbReference type="ChEBI" id="CHEBI:18420"/>
    </ligand>
</feature>
<feature type="binding site" evidence="1">
    <location>
        <position position="141"/>
    </location>
    <ligand>
        <name>deamido-NAD(+)</name>
        <dbReference type="ChEBI" id="CHEBI:58437"/>
    </ligand>
</feature>
<feature type="binding site" evidence="1">
    <location>
        <position position="161"/>
    </location>
    <ligand>
        <name>ATP</name>
        <dbReference type="ChEBI" id="CHEBI:30616"/>
    </ligand>
</feature>
<feature type="binding site" evidence="1">
    <location>
        <position position="166"/>
    </location>
    <ligand>
        <name>Mg(2+)</name>
        <dbReference type="ChEBI" id="CHEBI:18420"/>
    </ligand>
</feature>
<feature type="binding site" evidence="1">
    <location>
        <position position="174"/>
    </location>
    <ligand>
        <name>deamido-NAD(+)</name>
        <dbReference type="ChEBI" id="CHEBI:58437"/>
    </ligand>
</feature>
<feature type="binding site" evidence="1">
    <location>
        <position position="181"/>
    </location>
    <ligand>
        <name>deamido-NAD(+)</name>
        <dbReference type="ChEBI" id="CHEBI:58437"/>
    </ligand>
</feature>
<feature type="binding site" evidence="1">
    <location>
        <position position="190"/>
    </location>
    <ligand>
        <name>ATP</name>
        <dbReference type="ChEBI" id="CHEBI:30616"/>
    </ligand>
</feature>
<feature type="binding site" evidence="1">
    <location>
        <position position="212"/>
    </location>
    <ligand>
        <name>ATP</name>
        <dbReference type="ChEBI" id="CHEBI:30616"/>
    </ligand>
</feature>
<feature type="binding site" evidence="1">
    <location>
        <begin position="261"/>
        <end position="262"/>
    </location>
    <ligand>
        <name>deamido-NAD(+)</name>
        <dbReference type="ChEBI" id="CHEBI:58437"/>
    </ligand>
</feature>
<comment type="function">
    <text evidence="1">Catalyzes the ATP-dependent amidation of deamido-NAD to form NAD. Uses ammonia as a nitrogen source.</text>
</comment>
<comment type="catalytic activity">
    <reaction evidence="1">
        <text>deamido-NAD(+) + NH4(+) + ATP = AMP + diphosphate + NAD(+) + H(+)</text>
        <dbReference type="Rhea" id="RHEA:21188"/>
        <dbReference type="ChEBI" id="CHEBI:15378"/>
        <dbReference type="ChEBI" id="CHEBI:28938"/>
        <dbReference type="ChEBI" id="CHEBI:30616"/>
        <dbReference type="ChEBI" id="CHEBI:33019"/>
        <dbReference type="ChEBI" id="CHEBI:57540"/>
        <dbReference type="ChEBI" id="CHEBI:58437"/>
        <dbReference type="ChEBI" id="CHEBI:456215"/>
        <dbReference type="EC" id="6.3.1.5"/>
    </reaction>
</comment>
<comment type="pathway">
    <text evidence="1">Cofactor biosynthesis; NAD(+) biosynthesis; NAD(+) from deamido-NAD(+) (ammonia route): step 1/1.</text>
</comment>
<comment type="subunit">
    <text evidence="1">Homodimer.</text>
</comment>
<comment type="similarity">
    <text evidence="1">Belongs to the NAD synthetase family.</text>
</comment>
<sequence length="275" mass="30590">MRPLQAEIIKALHVAPTIDPEVEIRRSIDFLKAYLTKNTFLKTYVLGISGGQDSTLAGKLTEMAITEMRQETGDDRYQFIAVRLPYGNQADEADAMAAIDFMQADVTDRVDIQPATDAMVTALEANQLTIHDFNKGNIKARQRMIVQYGIAGEMHGAVVGTDHAAEAVTGFYTKYGDGGADIVPLWRLNKRQGKQMLAALDAPKHLYDKVPTADLEEDRPALPDEVALGVRYDDIDDYLEGRTVSDAAAEKIEAWYLKTAHKRHAAITVFDDFWK</sequence>
<keyword id="KW-0067">ATP-binding</keyword>
<keyword id="KW-0436">Ligase</keyword>
<keyword id="KW-0460">Magnesium</keyword>
<keyword id="KW-0479">Metal-binding</keyword>
<keyword id="KW-0520">NAD</keyword>
<keyword id="KW-0547">Nucleotide-binding</keyword>
<keyword id="KW-1185">Reference proteome</keyword>